<gene>
    <name evidence="1" type="primary">hslU</name>
    <name type="ordered locus">PM1748</name>
</gene>
<organism>
    <name type="scientific">Pasteurella multocida (strain Pm70)</name>
    <dbReference type="NCBI Taxonomy" id="272843"/>
    <lineage>
        <taxon>Bacteria</taxon>
        <taxon>Pseudomonadati</taxon>
        <taxon>Pseudomonadota</taxon>
        <taxon>Gammaproteobacteria</taxon>
        <taxon>Pasteurellales</taxon>
        <taxon>Pasteurellaceae</taxon>
        <taxon>Pasteurella</taxon>
    </lineage>
</organism>
<proteinExistence type="inferred from homology"/>
<keyword id="KW-0067">ATP-binding</keyword>
<keyword id="KW-0143">Chaperone</keyword>
<keyword id="KW-0963">Cytoplasm</keyword>
<keyword id="KW-0547">Nucleotide-binding</keyword>
<keyword id="KW-1185">Reference proteome</keyword>
<name>HSLU_PASMU</name>
<reference key="1">
    <citation type="journal article" date="2001" name="Proc. Natl. Acad. Sci. U.S.A.">
        <title>Complete genomic sequence of Pasteurella multocida Pm70.</title>
        <authorList>
            <person name="May B.J."/>
            <person name="Zhang Q."/>
            <person name="Li L.L."/>
            <person name="Paustian M.L."/>
            <person name="Whittam T.S."/>
            <person name="Kapur V."/>
        </authorList>
    </citation>
    <scope>NUCLEOTIDE SEQUENCE [LARGE SCALE GENOMIC DNA]</scope>
    <source>
        <strain>Pm70</strain>
    </source>
</reference>
<protein>
    <recommendedName>
        <fullName evidence="1">ATP-dependent protease ATPase subunit HslU</fullName>
    </recommendedName>
    <alternativeName>
        <fullName evidence="1">Unfoldase HslU</fullName>
    </alternativeName>
</protein>
<sequence>MSEMTPREIVSELDQHIIGQADAKRAVAIALRNRWRRMQLQEPLRHEVTPKNILMIGPTGVGKTEIARRLAKLANAPFIKVEATKFTEVGYVGKEVDSIIRDLTDSAMKLVRQTEIEKNRFRAEEAAEDRILDALLPPAKNQWGQVETTDSNNTTRQVFRKKLREGQLDDKEIDIDVAAPSMGVEIMAPPGMEEMTNQLQSMFQNLSSGQTKKRKMKIKDALKTLIDDEAAKLINPEDLKQKAIDAVEQNGIVFIDEIDKICKKGEYSGADVSREGVQRDLLPLVEGTTVSTKHGMVKTDHILFIASGAFQVARPSDLIPELQGRLPIRVELSALSAVDFERILTEPNASLTEQYKALMATEGVNIEFTGESIKKIAEAAFRVNEKTENIGARRLHTVMERLMDKISFNASDMQGQVVRIDEAYVMDALGDVVENEDLSRFIL</sequence>
<accession>P57968</accession>
<feature type="chain" id="PRO_0000160528" description="ATP-dependent protease ATPase subunit HslU">
    <location>
        <begin position="1"/>
        <end position="443"/>
    </location>
</feature>
<feature type="binding site" evidence="1">
    <location>
        <position position="18"/>
    </location>
    <ligand>
        <name>ATP</name>
        <dbReference type="ChEBI" id="CHEBI:30616"/>
    </ligand>
</feature>
<feature type="binding site" evidence="1">
    <location>
        <begin position="60"/>
        <end position="65"/>
    </location>
    <ligand>
        <name>ATP</name>
        <dbReference type="ChEBI" id="CHEBI:30616"/>
    </ligand>
</feature>
<feature type="binding site" evidence="1">
    <location>
        <position position="256"/>
    </location>
    <ligand>
        <name>ATP</name>
        <dbReference type="ChEBI" id="CHEBI:30616"/>
    </ligand>
</feature>
<feature type="binding site" evidence="1">
    <location>
        <position position="321"/>
    </location>
    <ligand>
        <name>ATP</name>
        <dbReference type="ChEBI" id="CHEBI:30616"/>
    </ligand>
</feature>
<feature type="binding site" evidence="1">
    <location>
        <position position="393"/>
    </location>
    <ligand>
        <name>ATP</name>
        <dbReference type="ChEBI" id="CHEBI:30616"/>
    </ligand>
</feature>
<comment type="function">
    <text evidence="1">ATPase subunit of a proteasome-like degradation complex; this subunit has chaperone activity. The binding of ATP and its subsequent hydrolysis by HslU are essential for unfolding of protein substrates subsequently hydrolyzed by HslV. HslU recognizes the N-terminal part of its protein substrates and unfolds these before they are guided to HslV for hydrolysis.</text>
</comment>
<comment type="subunit">
    <text evidence="1">A double ring-shaped homohexamer of HslV is capped on each side by a ring-shaped HslU homohexamer. The assembly of the HslU/HslV complex is dependent on binding of ATP.</text>
</comment>
<comment type="subcellular location">
    <subcellularLocation>
        <location evidence="1">Cytoplasm</location>
    </subcellularLocation>
</comment>
<comment type="similarity">
    <text evidence="1">Belongs to the ClpX chaperone family. HslU subfamily.</text>
</comment>
<evidence type="ECO:0000255" key="1">
    <source>
        <dbReference type="HAMAP-Rule" id="MF_00249"/>
    </source>
</evidence>
<dbReference type="EMBL" id="AE004439">
    <property type="protein sequence ID" value="AAK03832.1"/>
    <property type="molecule type" value="Genomic_DNA"/>
</dbReference>
<dbReference type="RefSeq" id="WP_005724699.1">
    <property type="nucleotide sequence ID" value="NC_002663.1"/>
</dbReference>
<dbReference type="SMR" id="P57968"/>
<dbReference type="STRING" id="272843.PM1748"/>
<dbReference type="EnsemblBacteria" id="AAK03832">
    <property type="protein sequence ID" value="AAK03832"/>
    <property type="gene ID" value="PM1748"/>
</dbReference>
<dbReference type="KEGG" id="pmu:PM1748"/>
<dbReference type="PATRIC" id="fig|272843.6.peg.1770"/>
<dbReference type="HOGENOM" id="CLU_033123_0_0_6"/>
<dbReference type="OrthoDB" id="9804062at2"/>
<dbReference type="Proteomes" id="UP000000809">
    <property type="component" value="Chromosome"/>
</dbReference>
<dbReference type="GO" id="GO:0009376">
    <property type="term" value="C:HslUV protease complex"/>
    <property type="evidence" value="ECO:0007669"/>
    <property type="project" value="UniProtKB-UniRule"/>
</dbReference>
<dbReference type="GO" id="GO:0005524">
    <property type="term" value="F:ATP binding"/>
    <property type="evidence" value="ECO:0007669"/>
    <property type="project" value="UniProtKB-UniRule"/>
</dbReference>
<dbReference type="GO" id="GO:0016887">
    <property type="term" value="F:ATP hydrolysis activity"/>
    <property type="evidence" value="ECO:0007669"/>
    <property type="project" value="InterPro"/>
</dbReference>
<dbReference type="GO" id="GO:0008233">
    <property type="term" value="F:peptidase activity"/>
    <property type="evidence" value="ECO:0007669"/>
    <property type="project" value="InterPro"/>
</dbReference>
<dbReference type="GO" id="GO:0036402">
    <property type="term" value="F:proteasome-activating activity"/>
    <property type="evidence" value="ECO:0007669"/>
    <property type="project" value="UniProtKB-UniRule"/>
</dbReference>
<dbReference type="GO" id="GO:0043335">
    <property type="term" value="P:protein unfolding"/>
    <property type="evidence" value="ECO:0007669"/>
    <property type="project" value="UniProtKB-UniRule"/>
</dbReference>
<dbReference type="GO" id="GO:0051603">
    <property type="term" value="P:proteolysis involved in protein catabolic process"/>
    <property type="evidence" value="ECO:0007669"/>
    <property type="project" value="TreeGrafter"/>
</dbReference>
<dbReference type="CDD" id="cd19498">
    <property type="entry name" value="RecA-like_HslU"/>
    <property type="match status" value="1"/>
</dbReference>
<dbReference type="FunFam" id="1.10.8.10:FF:000028">
    <property type="entry name" value="ATP-dependent protease ATPase subunit HslU"/>
    <property type="match status" value="1"/>
</dbReference>
<dbReference type="FunFam" id="1.10.8.60:FF:000027">
    <property type="entry name" value="ATP-dependent protease ATPase subunit HslU"/>
    <property type="match status" value="1"/>
</dbReference>
<dbReference type="FunFam" id="3.40.50.300:FF:000213">
    <property type="entry name" value="ATP-dependent protease ATPase subunit HslU"/>
    <property type="match status" value="1"/>
</dbReference>
<dbReference type="FunFam" id="3.40.50.300:FF:000220">
    <property type="entry name" value="ATP-dependent protease ATPase subunit HslU"/>
    <property type="match status" value="1"/>
</dbReference>
<dbReference type="Gene3D" id="1.10.8.60">
    <property type="match status" value="1"/>
</dbReference>
<dbReference type="Gene3D" id="1.10.8.10">
    <property type="entry name" value="DNA helicase RuvA subunit, C-terminal domain"/>
    <property type="match status" value="1"/>
</dbReference>
<dbReference type="Gene3D" id="3.40.50.300">
    <property type="entry name" value="P-loop containing nucleotide triphosphate hydrolases"/>
    <property type="match status" value="2"/>
</dbReference>
<dbReference type="HAMAP" id="MF_00249">
    <property type="entry name" value="HslU"/>
    <property type="match status" value="1"/>
</dbReference>
<dbReference type="InterPro" id="IPR003593">
    <property type="entry name" value="AAA+_ATPase"/>
</dbReference>
<dbReference type="InterPro" id="IPR050052">
    <property type="entry name" value="ATP-dep_Clp_protease_ClpX"/>
</dbReference>
<dbReference type="InterPro" id="IPR003959">
    <property type="entry name" value="ATPase_AAA_core"/>
</dbReference>
<dbReference type="InterPro" id="IPR019489">
    <property type="entry name" value="Clp_ATPase_C"/>
</dbReference>
<dbReference type="InterPro" id="IPR004491">
    <property type="entry name" value="HslU"/>
</dbReference>
<dbReference type="InterPro" id="IPR027417">
    <property type="entry name" value="P-loop_NTPase"/>
</dbReference>
<dbReference type="NCBIfam" id="TIGR00390">
    <property type="entry name" value="hslU"/>
    <property type="match status" value="1"/>
</dbReference>
<dbReference type="NCBIfam" id="NF003544">
    <property type="entry name" value="PRK05201.1"/>
    <property type="match status" value="1"/>
</dbReference>
<dbReference type="PANTHER" id="PTHR48102">
    <property type="entry name" value="ATP-DEPENDENT CLP PROTEASE ATP-BINDING SUBUNIT CLPX-LIKE, MITOCHONDRIAL-RELATED"/>
    <property type="match status" value="1"/>
</dbReference>
<dbReference type="PANTHER" id="PTHR48102:SF3">
    <property type="entry name" value="ATP-DEPENDENT PROTEASE ATPASE SUBUNIT HSLU"/>
    <property type="match status" value="1"/>
</dbReference>
<dbReference type="Pfam" id="PF00004">
    <property type="entry name" value="AAA"/>
    <property type="match status" value="1"/>
</dbReference>
<dbReference type="Pfam" id="PF07724">
    <property type="entry name" value="AAA_2"/>
    <property type="match status" value="1"/>
</dbReference>
<dbReference type="SMART" id="SM00382">
    <property type="entry name" value="AAA"/>
    <property type="match status" value="1"/>
</dbReference>
<dbReference type="SMART" id="SM01086">
    <property type="entry name" value="ClpB_D2-small"/>
    <property type="match status" value="1"/>
</dbReference>
<dbReference type="SUPFAM" id="SSF52540">
    <property type="entry name" value="P-loop containing nucleoside triphosphate hydrolases"/>
    <property type="match status" value="1"/>
</dbReference>